<protein>
    <recommendedName>
        <fullName>Hemoglobin subunit alpha</fullName>
    </recommendedName>
    <alternativeName>
        <fullName>Alpha-globin</fullName>
    </alternativeName>
    <alternativeName>
        <fullName>Hemoglobin alpha chain</fullName>
    </alternativeName>
</protein>
<reference key="1">
    <citation type="journal article" date="1989" name="Nucleic Acids Res.">
        <title>cDNA and deduced amino acid sequence of the Salmo salar (Atlantic salmon) adult hemoglobin alpha chain.</title>
        <authorList>
            <person name="Wolff J.P."/>
            <person name="Gannon F."/>
        </authorList>
    </citation>
    <scope>NUCLEOTIDE SEQUENCE [MRNA]</scope>
    <source>
        <tissue>Kidney</tissue>
    </source>
</reference>
<gene>
    <name type="primary">hba</name>
</gene>
<sequence length="143" mass="15219">MSLTARDKSVVNAFWGKIKGKADVVGAEALGRMLTAYPQTKTYFSHWADLSPGSAPVKKHGGVIMGAIGNAVGLMDDLVGGMSGLSDLHAFKLRVDPGNFKILSHNILVTLAIHFPADFTPEVHIAVDKFLAALSAALADKYR</sequence>
<dbReference type="EMBL" id="X14431">
    <property type="protein sequence ID" value="CAA32596.1"/>
    <property type="molecule type" value="mRNA"/>
</dbReference>
<dbReference type="PIR" id="S04589">
    <property type="entry name" value="S04589"/>
</dbReference>
<dbReference type="RefSeq" id="NP_001117134.1">
    <property type="nucleotide sequence ID" value="NM_001123662.1"/>
</dbReference>
<dbReference type="SMR" id="P11251"/>
<dbReference type="STRING" id="8030.ENSSSAP00000075606"/>
<dbReference type="PaxDb" id="8030-ENSSSAP00000075606"/>
<dbReference type="GeneID" id="100136572"/>
<dbReference type="KEGG" id="sasa:100136572"/>
<dbReference type="CTD" id="15121"/>
<dbReference type="OrthoDB" id="368591at7898"/>
<dbReference type="Proteomes" id="UP000087266">
    <property type="component" value="Unplaced"/>
</dbReference>
<dbReference type="GO" id="GO:0072562">
    <property type="term" value="C:blood microparticle"/>
    <property type="evidence" value="ECO:0007669"/>
    <property type="project" value="TreeGrafter"/>
</dbReference>
<dbReference type="GO" id="GO:0031838">
    <property type="term" value="C:haptoglobin-hemoglobin complex"/>
    <property type="evidence" value="ECO:0007669"/>
    <property type="project" value="TreeGrafter"/>
</dbReference>
<dbReference type="GO" id="GO:0005833">
    <property type="term" value="C:hemoglobin complex"/>
    <property type="evidence" value="ECO:0007669"/>
    <property type="project" value="InterPro"/>
</dbReference>
<dbReference type="GO" id="GO:0031720">
    <property type="term" value="F:haptoglobin binding"/>
    <property type="evidence" value="ECO:0007669"/>
    <property type="project" value="TreeGrafter"/>
</dbReference>
<dbReference type="GO" id="GO:0020037">
    <property type="term" value="F:heme binding"/>
    <property type="evidence" value="ECO:0007669"/>
    <property type="project" value="InterPro"/>
</dbReference>
<dbReference type="GO" id="GO:0046872">
    <property type="term" value="F:metal ion binding"/>
    <property type="evidence" value="ECO:0007669"/>
    <property type="project" value="UniProtKB-KW"/>
</dbReference>
<dbReference type="GO" id="GO:0043177">
    <property type="term" value="F:organic acid binding"/>
    <property type="evidence" value="ECO:0007669"/>
    <property type="project" value="TreeGrafter"/>
</dbReference>
<dbReference type="GO" id="GO:0019825">
    <property type="term" value="F:oxygen binding"/>
    <property type="evidence" value="ECO:0007669"/>
    <property type="project" value="InterPro"/>
</dbReference>
<dbReference type="GO" id="GO:0005344">
    <property type="term" value="F:oxygen carrier activity"/>
    <property type="evidence" value="ECO:0007669"/>
    <property type="project" value="UniProtKB-KW"/>
</dbReference>
<dbReference type="GO" id="GO:0004601">
    <property type="term" value="F:peroxidase activity"/>
    <property type="evidence" value="ECO:0007669"/>
    <property type="project" value="TreeGrafter"/>
</dbReference>
<dbReference type="GO" id="GO:0042744">
    <property type="term" value="P:hydrogen peroxide catabolic process"/>
    <property type="evidence" value="ECO:0007669"/>
    <property type="project" value="TreeGrafter"/>
</dbReference>
<dbReference type="CDD" id="cd08927">
    <property type="entry name" value="Hb-alpha-like"/>
    <property type="match status" value="1"/>
</dbReference>
<dbReference type="FunFam" id="1.10.490.10:FF:000002">
    <property type="entry name" value="Hemoglobin subunit alpha"/>
    <property type="match status" value="1"/>
</dbReference>
<dbReference type="Gene3D" id="1.10.490.10">
    <property type="entry name" value="Globins"/>
    <property type="match status" value="1"/>
</dbReference>
<dbReference type="InterPro" id="IPR000971">
    <property type="entry name" value="Globin"/>
</dbReference>
<dbReference type="InterPro" id="IPR009050">
    <property type="entry name" value="Globin-like_sf"/>
</dbReference>
<dbReference type="InterPro" id="IPR012292">
    <property type="entry name" value="Globin/Proto"/>
</dbReference>
<dbReference type="InterPro" id="IPR002338">
    <property type="entry name" value="Hemoglobin_a-typ"/>
</dbReference>
<dbReference type="InterPro" id="IPR050056">
    <property type="entry name" value="Hemoglobin_oxygen_transport"/>
</dbReference>
<dbReference type="PANTHER" id="PTHR11442:SF91">
    <property type="entry name" value="EMBRYONIC ALPHA GLOBIN E1-RELATED"/>
    <property type="match status" value="1"/>
</dbReference>
<dbReference type="PANTHER" id="PTHR11442">
    <property type="entry name" value="HEMOGLOBIN FAMILY MEMBER"/>
    <property type="match status" value="1"/>
</dbReference>
<dbReference type="Pfam" id="PF00042">
    <property type="entry name" value="Globin"/>
    <property type="match status" value="1"/>
</dbReference>
<dbReference type="PRINTS" id="PR00612">
    <property type="entry name" value="ALPHAHAEM"/>
</dbReference>
<dbReference type="SUPFAM" id="SSF46458">
    <property type="entry name" value="Globin-like"/>
    <property type="match status" value="1"/>
</dbReference>
<dbReference type="PROSITE" id="PS01033">
    <property type="entry name" value="GLOBIN"/>
    <property type="match status" value="1"/>
</dbReference>
<name>HBA_SALSA</name>
<organism>
    <name type="scientific">Salmo salar</name>
    <name type="common">Atlantic salmon</name>
    <dbReference type="NCBI Taxonomy" id="8030"/>
    <lineage>
        <taxon>Eukaryota</taxon>
        <taxon>Metazoa</taxon>
        <taxon>Chordata</taxon>
        <taxon>Craniata</taxon>
        <taxon>Vertebrata</taxon>
        <taxon>Euteleostomi</taxon>
        <taxon>Actinopterygii</taxon>
        <taxon>Neopterygii</taxon>
        <taxon>Teleostei</taxon>
        <taxon>Protacanthopterygii</taxon>
        <taxon>Salmoniformes</taxon>
        <taxon>Salmonidae</taxon>
        <taxon>Salmoninae</taxon>
        <taxon>Salmo</taxon>
    </lineage>
</organism>
<feature type="initiator methionine" description="Removed">
    <location>
        <position position="1"/>
    </location>
</feature>
<feature type="chain" id="PRO_0000052760" description="Hemoglobin subunit alpha">
    <location>
        <begin position="2"/>
        <end position="143"/>
    </location>
</feature>
<feature type="domain" description="Globin" evidence="1">
    <location>
        <begin position="2"/>
        <end position="143"/>
    </location>
</feature>
<feature type="binding site" evidence="1">
    <location>
        <position position="60"/>
    </location>
    <ligand>
        <name>O2</name>
        <dbReference type="ChEBI" id="CHEBI:15379"/>
    </ligand>
</feature>
<feature type="binding site" description="proximal binding residue" evidence="1">
    <location>
        <position position="89"/>
    </location>
    <ligand>
        <name>heme b</name>
        <dbReference type="ChEBI" id="CHEBI:60344"/>
    </ligand>
    <ligandPart>
        <name>Fe</name>
        <dbReference type="ChEBI" id="CHEBI:18248"/>
    </ligandPart>
</feature>
<evidence type="ECO:0000255" key="1">
    <source>
        <dbReference type="PROSITE-ProRule" id="PRU00238"/>
    </source>
</evidence>
<accession>P11251</accession>
<proteinExistence type="evidence at transcript level"/>
<keyword id="KW-0349">Heme</keyword>
<keyword id="KW-0408">Iron</keyword>
<keyword id="KW-0479">Metal-binding</keyword>
<keyword id="KW-0561">Oxygen transport</keyword>
<keyword id="KW-1185">Reference proteome</keyword>
<keyword id="KW-0813">Transport</keyword>
<comment type="function">
    <text>Involved in oxygen transport from gills to the various peripheral tissues.</text>
</comment>
<comment type="subunit">
    <text>Heterotetramer of two alpha chains and two beta chains.</text>
</comment>
<comment type="tissue specificity">
    <text>Red blood cells.</text>
</comment>
<comment type="similarity">
    <text evidence="1">Belongs to the globin family.</text>
</comment>